<sequence>MMPRLQQHKIILRQLGLQPYAPVSQAMHNFTEFRTDTTPDEIWLVEHQHVFTQGQAGKAEHVLMPGDIPVIQSDRGGQVTYHGPGQQVMYVMVDLKRAKIGVRQLVTAIENTVIETLAHFNIDSHARPDAPGVYVEQQKICSLGLRIRRGCSFHGLALNIAMDLEPFQRINPCGYAGMQMTQVSALQPGVTVADVQPVLVREFTRQLGYPTAKLQPWSLSDYLLSSHSSSSVL</sequence>
<comment type="function">
    <text evidence="1">Catalyzes the transfer of endogenously produced octanoic acid from octanoyl-acyl-carrier-protein onto the lipoyl domains of lipoate-dependent enzymes. Lipoyl-ACP can also act as a substrate although octanoyl-ACP is likely to be the physiological substrate.</text>
</comment>
<comment type="catalytic activity">
    <reaction evidence="1">
        <text>octanoyl-[ACP] + L-lysyl-[protein] = N(6)-octanoyl-L-lysyl-[protein] + holo-[ACP] + H(+)</text>
        <dbReference type="Rhea" id="RHEA:17665"/>
        <dbReference type="Rhea" id="RHEA-COMP:9636"/>
        <dbReference type="Rhea" id="RHEA-COMP:9685"/>
        <dbReference type="Rhea" id="RHEA-COMP:9752"/>
        <dbReference type="Rhea" id="RHEA-COMP:9928"/>
        <dbReference type="ChEBI" id="CHEBI:15378"/>
        <dbReference type="ChEBI" id="CHEBI:29969"/>
        <dbReference type="ChEBI" id="CHEBI:64479"/>
        <dbReference type="ChEBI" id="CHEBI:78463"/>
        <dbReference type="ChEBI" id="CHEBI:78809"/>
        <dbReference type="EC" id="2.3.1.181"/>
    </reaction>
</comment>
<comment type="pathway">
    <text evidence="1">Protein modification; protein lipoylation via endogenous pathway; protein N(6)-(lipoyl)lysine from octanoyl-[acyl-carrier-protein]: step 1/2.</text>
</comment>
<comment type="subcellular location">
    <subcellularLocation>
        <location evidence="1">Cytoplasm</location>
    </subcellularLocation>
</comment>
<comment type="miscellaneous">
    <text evidence="1">In the reaction, the free carboxyl group of octanoic acid is attached via an amide linkage to the epsilon-amino group of a specific lysine residue of lipoyl domains of lipoate-dependent enzymes.</text>
</comment>
<comment type="similarity">
    <text evidence="1">Belongs to the LipB family.</text>
</comment>
<name>LIPB_YERPE</name>
<keyword id="KW-0012">Acyltransferase</keyword>
<keyword id="KW-0963">Cytoplasm</keyword>
<keyword id="KW-1185">Reference proteome</keyword>
<keyword id="KW-0808">Transferase</keyword>
<evidence type="ECO:0000255" key="1">
    <source>
        <dbReference type="HAMAP-Rule" id="MF_00013"/>
    </source>
</evidence>
<evidence type="ECO:0000255" key="2">
    <source>
        <dbReference type="PROSITE-ProRule" id="PRU01067"/>
    </source>
</evidence>
<protein>
    <recommendedName>
        <fullName evidence="1">Octanoyltransferase</fullName>
        <ecNumber evidence="1">2.3.1.181</ecNumber>
    </recommendedName>
    <alternativeName>
        <fullName evidence="1">Lipoate-protein ligase B</fullName>
    </alternativeName>
    <alternativeName>
        <fullName evidence="1">Lipoyl/octanoyl transferase</fullName>
    </alternativeName>
    <alternativeName>
        <fullName evidence="1">Octanoyl-[acyl-carrier-protein]-protein N-octanoyltransferase</fullName>
    </alternativeName>
</protein>
<accession>Q8ZDG9</accession>
<accession>Q0WDT3</accession>
<feature type="chain" id="PRO_0000062900" description="Octanoyltransferase">
    <location>
        <begin position="1"/>
        <end position="233"/>
    </location>
</feature>
<feature type="domain" description="BPL/LPL catalytic" evidence="2">
    <location>
        <begin position="36"/>
        <end position="211"/>
    </location>
</feature>
<feature type="active site" description="Acyl-thioester intermediate" evidence="1">
    <location>
        <position position="173"/>
    </location>
</feature>
<feature type="binding site" evidence="1">
    <location>
        <begin position="75"/>
        <end position="82"/>
    </location>
    <ligand>
        <name>substrate</name>
    </ligand>
</feature>
<feature type="binding site" evidence="1">
    <location>
        <begin position="142"/>
        <end position="144"/>
    </location>
    <ligand>
        <name>substrate</name>
    </ligand>
</feature>
<feature type="binding site" evidence="1">
    <location>
        <begin position="155"/>
        <end position="157"/>
    </location>
    <ligand>
        <name>substrate</name>
    </ligand>
</feature>
<feature type="site" description="Lowers pKa of active site Cys" evidence="1">
    <location>
        <position position="139"/>
    </location>
</feature>
<dbReference type="EC" id="2.3.1.181" evidence="1"/>
<dbReference type="EMBL" id="AL590842">
    <property type="protein sequence ID" value="CAL21222.1"/>
    <property type="molecule type" value="Genomic_DNA"/>
</dbReference>
<dbReference type="EMBL" id="AE009952">
    <property type="protein sequence ID" value="AAM84749.1"/>
    <property type="molecule type" value="Genomic_DNA"/>
</dbReference>
<dbReference type="EMBL" id="AE017042">
    <property type="protein sequence ID" value="AAS61360.1"/>
    <property type="molecule type" value="Genomic_DNA"/>
</dbReference>
<dbReference type="PIR" id="AC0317">
    <property type="entry name" value="AC0317"/>
</dbReference>
<dbReference type="RefSeq" id="WP_002218201.1">
    <property type="nucleotide sequence ID" value="NZ_WUCM01000011.1"/>
</dbReference>
<dbReference type="SMR" id="Q8ZDG9"/>
<dbReference type="IntAct" id="Q8ZDG9">
    <property type="interactions" value="3"/>
</dbReference>
<dbReference type="STRING" id="214092.YPO2599"/>
<dbReference type="PaxDb" id="214092-YPO2599"/>
<dbReference type="EnsemblBacteria" id="AAS61360">
    <property type="protein sequence ID" value="AAS61360"/>
    <property type="gene ID" value="YP_1114"/>
</dbReference>
<dbReference type="GeneID" id="57976096"/>
<dbReference type="KEGG" id="ype:YPO2599"/>
<dbReference type="KEGG" id="ypk:y1173"/>
<dbReference type="KEGG" id="ypm:YP_1114"/>
<dbReference type="eggNOG" id="COG0321">
    <property type="taxonomic scope" value="Bacteria"/>
</dbReference>
<dbReference type="HOGENOM" id="CLU_035168_3_1_6"/>
<dbReference type="OMA" id="GEVTYHC"/>
<dbReference type="UniPathway" id="UPA00538">
    <property type="reaction ID" value="UER00592"/>
</dbReference>
<dbReference type="Proteomes" id="UP000000815">
    <property type="component" value="Chromosome"/>
</dbReference>
<dbReference type="Proteomes" id="UP000001019">
    <property type="component" value="Chromosome"/>
</dbReference>
<dbReference type="Proteomes" id="UP000002490">
    <property type="component" value="Chromosome"/>
</dbReference>
<dbReference type="GO" id="GO:0005737">
    <property type="term" value="C:cytoplasm"/>
    <property type="evidence" value="ECO:0007669"/>
    <property type="project" value="UniProtKB-SubCell"/>
</dbReference>
<dbReference type="GO" id="GO:0033819">
    <property type="term" value="F:lipoyl(octanoyl) transferase activity"/>
    <property type="evidence" value="ECO:0000318"/>
    <property type="project" value="GO_Central"/>
</dbReference>
<dbReference type="GO" id="GO:0036211">
    <property type="term" value="P:protein modification process"/>
    <property type="evidence" value="ECO:0007669"/>
    <property type="project" value="InterPro"/>
</dbReference>
<dbReference type="CDD" id="cd16444">
    <property type="entry name" value="LipB"/>
    <property type="match status" value="1"/>
</dbReference>
<dbReference type="FunFam" id="3.30.930.10:FF:000020">
    <property type="entry name" value="Octanoyltransferase"/>
    <property type="match status" value="1"/>
</dbReference>
<dbReference type="Gene3D" id="3.30.930.10">
    <property type="entry name" value="Bira Bifunctional Protein, Domain 2"/>
    <property type="match status" value="1"/>
</dbReference>
<dbReference type="HAMAP" id="MF_00013">
    <property type="entry name" value="LipB"/>
    <property type="match status" value="1"/>
</dbReference>
<dbReference type="InterPro" id="IPR045864">
    <property type="entry name" value="aa-tRNA-synth_II/BPL/LPL"/>
</dbReference>
<dbReference type="InterPro" id="IPR004143">
    <property type="entry name" value="BPL_LPL_catalytic"/>
</dbReference>
<dbReference type="InterPro" id="IPR000544">
    <property type="entry name" value="Octanoyltransferase"/>
</dbReference>
<dbReference type="InterPro" id="IPR020605">
    <property type="entry name" value="Octanoyltransferase_CS"/>
</dbReference>
<dbReference type="NCBIfam" id="TIGR00214">
    <property type="entry name" value="lipB"/>
    <property type="match status" value="1"/>
</dbReference>
<dbReference type="NCBIfam" id="NF010922">
    <property type="entry name" value="PRK14342.1"/>
    <property type="match status" value="1"/>
</dbReference>
<dbReference type="PANTHER" id="PTHR10993:SF7">
    <property type="entry name" value="LIPOYLTRANSFERASE 2, MITOCHONDRIAL-RELATED"/>
    <property type="match status" value="1"/>
</dbReference>
<dbReference type="PANTHER" id="PTHR10993">
    <property type="entry name" value="OCTANOYLTRANSFERASE"/>
    <property type="match status" value="1"/>
</dbReference>
<dbReference type="Pfam" id="PF21948">
    <property type="entry name" value="LplA-B_cat"/>
    <property type="match status" value="1"/>
</dbReference>
<dbReference type="PIRSF" id="PIRSF016262">
    <property type="entry name" value="LPLase"/>
    <property type="match status" value="1"/>
</dbReference>
<dbReference type="SUPFAM" id="SSF55681">
    <property type="entry name" value="Class II aaRS and biotin synthetases"/>
    <property type="match status" value="1"/>
</dbReference>
<dbReference type="PROSITE" id="PS51733">
    <property type="entry name" value="BPL_LPL_CATALYTIC"/>
    <property type="match status" value="1"/>
</dbReference>
<dbReference type="PROSITE" id="PS01313">
    <property type="entry name" value="LIPB"/>
    <property type="match status" value="1"/>
</dbReference>
<proteinExistence type="inferred from homology"/>
<gene>
    <name evidence="1" type="primary">lipB</name>
    <name type="ordered locus">YPO2599</name>
    <name type="ordered locus">y1173</name>
    <name type="ordered locus">YP_1114</name>
</gene>
<organism>
    <name type="scientific">Yersinia pestis</name>
    <dbReference type="NCBI Taxonomy" id="632"/>
    <lineage>
        <taxon>Bacteria</taxon>
        <taxon>Pseudomonadati</taxon>
        <taxon>Pseudomonadota</taxon>
        <taxon>Gammaproteobacteria</taxon>
        <taxon>Enterobacterales</taxon>
        <taxon>Yersiniaceae</taxon>
        <taxon>Yersinia</taxon>
    </lineage>
</organism>
<reference key="1">
    <citation type="journal article" date="2001" name="Nature">
        <title>Genome sequence of Yersinia pestis, the causative agent of plague.</title>
        <authorList>
            <person name="Parkhill J."/>
            <person name="Wren B.W."/>
            <person name="Thomson N.R."/>
            <person name="Titball R.W."/>
            <person name="Holden M.T.G."/>
            <person name="Prentice M.B."/>
            <person name="Sebaihia M."/>
            <person name="James K.D."/>
            <person name="Churcher C.M."/>
            <person name="Mungall K.L."/>
            <person name="Baker S."/>
            <person name="Basham D."/>
            <person name="Bentley S.D."/>
            <person name="Brooks K."/>
            <person name="Cerdeno-Tarraga A.-M."/>
            <person name="Chillingworth T."/>
            <person name="Cronin A."/>
            <person name="Davies R.M."/>
            <person name="Davis P."/>
            <person name="Dougan G."/>
            <person name="Feltwell T."/>
            <person name="Hamlin N."/>
            <person name="Holroyd S."/>
            <person name="Jagels K."/>
            <person name="Karlyshev A.V."/>
            <person name="Leather S."/>
            <person name="Moule S."/>
            <person name="Oyston P.C.F."/>
            <person name="Quail M.A."/>
            <person name="Rutherford K.M."/>
            <person name="Simmonds M."/>
            <person name="Skelton J."/>
            <person name="Stevens K."/>
            <person name="Whitehead S."/>
            <person name="Barrell B.G."/>
        </authorList>
    </citation>
    <scope>NUCLEOTIDE SEQUENCE [LARGE SCALE GENOMIC DNA]</scope>
    <source>
        <strain>CO-92 / Biovar Orientalis</strain>
    </source>
</reference>
<reference key="2">
    <citation type="journal article" date="2002" name="J. Bacteriol.">
        <title>Genome sequence of Yersinia pestis KIM.</title>
        <authorList>
            <person name="Deng W."/>
            <person name="Burland V."/>
            <person name="Plunkett G. III"/>
            <person name="Boutin A."/>
            <person name="Mayhew G.F."/>
            <person name="Liss P."/>
            <person name="Perna N.T."/>
            <person name="Rose D.J."/>
            <person name="Mau B."/>
            <person name="Zhou S."/>
            <person name="Schwartz D.C."/>
            <person name="Fetherston J.D."/>
            <person name="Lindler L.E."/>
            <person name="Brubaker R.R."/>
            <person name="Plano G.V."/>
            <person name="Straley S.C."/>
            <person name="McDonough K.A."/>
            <person name="Nilles M.L."/>
            <person name="Matson J.S."/>
            <person name="Blattner F.R."/>
            <person name="Perry R.D."/>
        </authorList>
    </citation>
    <scope>NUCLEOTIDE SEQUENCE [LARGE SCALE GENOMIC DNA]</scope>
    <source>
        <strain>KIM10+ / Biovar Mediaevalis</strain>
    </source>
</reference>
<reference key="3">
    <citation type="journal article" date="2004" name="DNA Res.">
        <title>Complete genome sequence of Yersinia pestis strain 91001, an isolate avirulent to humans.</title>
        <authorList>
            <person name="Song Y."/>
            <person name="Tong Z."/>
            <person name="Wang J."/>
            <person name="Wang L."/>
            <person name="Guo Z."/>
            <person name="Han Y."/>
            <person name="Zhang J."/>
            <person name="Pei D."/>
            <person name="Zhou D."/>
            <person name="Qin H."/>
            <person name="Pang X."/>
            <person name="Han Y."/>
            <person name="Zhai J."/>
            <person name="Li M."/>
            <person name="Cui B."/>
            <person name="Qi Z."/>
            <person name="Jin L."/>
            <person name="Dai R."/>
            <person name="Chen F."/>
            <person name="Li S."/>
            <person name="Ye C."/>
            <person name="Du Z."/>
            <person name="Lin W."/>
            <person name="Wang J."/>
            <person name="Yu J."/>
            <person name="Yang H."/>
            <person name="Wang J."/>
            <person name="Huang P."/>
            <person name="Yang R."/>
        </authorList>
    </citation>
    <scope>NUCLEOTIDE SEQUENCE [LARGE SCALE GENOMIC DNA]</scope>
    <source>
        <strain>91001 / Biovar Mediaevalis</strain>
    </source>
</reference>